<name>NRDI_SHIFL</name>
<gene>
    <name type="primary">nrdI</name>
    <name type="ordered locus">SF2702</name>
    <name type="ordered locus">S2888</name>
</gene>
<dbReference type="EMBL" id="AE005674">
    <property type="protein sequence ID" value="AAN44195.1"/>
    <property type="molecule type" value="Genomic_DNA"/>
</dbReference>
<dbReference type="EMBL" id="AE014073">
    <property type="protein sequence ID" value="AAP18022.1"/>
    <property type="molecule type" value="Genomic_DNA"/>
</dbReference>
<dbReference type="RefSeq" id="NP_708488.1">
    <property type="nucleotide sequence ID" value="NC_004337.2"/>
</dbReference>
<dbReference type="RefSeq" id="WP_000080947.1">
    <property type="nucleotide sequence ID" value="NZ_WPGW01000014.1"/>
</dbReference>
<dbReference type="SMR" id="P0A775"/>
<dbReference type="STRING" id="198214.SF2702"/>
<dbReference type="PaxDb" id="198214-SF2702"/>
<dbReference type="GeneID" id="1027460"/>
<dbReference type="GeneID" id="75172757"/>
<dbReference type="KEGG" id="sfl:SF2702"/>
<dbReference type="KEGG" id="sfx:S2888"/>
<dbReference type="PATRIC" id="fig|198214.7.peg.3217"/>
<dbReference type="HOGENOM" id="CLU_114845_0_0_6"/>
<dbReference type="Proteomes" id="UP000001006">
    <property type="component" value="Chromosome"/>
</dbReference>
<dbReference type="Proteomes" id="UP000002673">
    <property type="component" value="Chromosome"/>
</dbReference>
<dbReference type="GO" id="GO:0010181">
    <property type="term" value="F:FMN binding"/>
    <property type="evidence" value="ECO:0007669"/>
    <property type="project" value="InterPro"/>
</dbReference>
<dbReference type="GO" id="GO:0036211">
    <property type="term" value="P:protein modification process"/>
    <property type="evidence" value="ECO:0007669"/>
    <property type="project" value="InterPro"/>
</dbReference>
<dbReference type="FunFam" id="3.40.50.360:FF:000005">
    <property type="entry name" value="Protein NrdI"/>
    <property type="match status" value="1"/>
</dbReference>
<dbReference type="Gene3D" id="3.40.50.360">
    <property type="match status" value="1"/>
</dbReference>
<dbReference type="HAMAP" id="MF_00128">
    <property type="entry name" value="NrdI"/>
    <property type="match status" value="1"/>
</dbReference>
<dbReference type="InterPro" id="IPR029039">
    <property type="entry name" value="Flavoprotein-like_sf"/>
</dbReference>
<dbReference type="InterPro" id="IPR020852">
    <property type="entry name" value="RNR_Ib_NrdI_bac"/>
</dbReference>
<dbReference type="InterPro" id="IPR004465">
    <property type="entry name" value="RNR_NrdI"/>
</dbReference>
<dbReference type="NCBIfam" id="TIGR00333">
    <property type="entry name" value="nrdI"/>
    <property type="match status" value="1"/>
</dbReference>
<dbReference type="PANTHER" id="PTHR37297">
    <property type="entry name" value="PROTEIN NRDI"/>
    <property type="match status" value="1"/>
</dbReference>
<dbReference type="PANTHER" id="PTHR37297:SF1">
    <property type="entry name" value="PROTEIN NRDI"/>
    <property type="match status" value="1"/>
</dbReference>
<dbReference type="Pfam" id="PF07972">
    <property type="entry name" value="Flavodoxin_NdrI"/>
    <property type="match status" value="1"/>
</dbReference>
<dbReference type="PIRSF" id="PIRSF005087">
    <property type="entry name" value="NrdI"/>
    <property type="match status" value="1"/>
</dbReference>
<dbReference type="SUPFAM" id="SSF52218">
    <property type="entry name" value="Flavoproteins"/>
    <property type="match status" value="1"/>
</dbReference>
<protein>
    <recommendedName>
        <fullName>Protein NrdI</fullName>
    </recommendedName>
</protein>
<accession>P0A775</accession>
<accession>P77025</accession>
<accession>Q47415</accession>
<evidence type="ECO:0000250" key="1"/>
<evidence type="ECO:0000305" key="2"/>
<reference key="1">
    <citation type="journal article" date="2002" name="Nucleic Acids Res.">
        <title>Genome sequence of Shigella flexneri 2a: insights into pathogenicity through comparison with genomes of Escherichia coli K12 and O157.</title>
        <authorList>
            <person name="Jin Q."/>
            <person name="Yuan Z."/>
            <person name="Xu J."/>
            <person name="Wang Y."/>
            <person name="Shen Y."/>
            <person name="Lu W."/>
            <person name="Wang J."/>
            <person name="Liu H."/>
            <person name="Yang J."/>
            <person name="Yang F."/>
            <person name="Zhang X."/>
            <person name="Zhang J."/>
            <person name="Yang G."/>
            <person name="Wu H."/>
            <person name="Qu D."/>
            <person name="Dong J."/>
            <person name="Sun L."/>
            <person name="Xue Y."/>
            <person name="Zhao A."/>
            <person name="Gao Y."/>
            <person name="Zhu J."/>
            <person name="Kan B."/>
            <person name="Ding K."/>
            <person name="Chen S."/>
            <person name="Cheng H."/>
            <person name="Yao Z."/>
            <person name="He B."/>
            <person name="Chen R."/>
            <person name="Ma D."/>
            <person name="Qiang B."/>
            <person name="Wen Y."/>
            <person name="Hou Y."/>
            <person name="Yu J."/>
        </authorList>
    </citation>
    <scope>NUCLEOTIDE SEQUENCE [LARGE SCALE GENOMIC DNA]</scope>
    <source>
        <strain>301 / Serotype 2a</strain>
    </source>
</reference>
<reference key="2">
    <citation type="journal article" date="2003" name="Infect. Immun.">
        <title>Complete genome sequence and comparative genomics of Shigella flexneri serotype 2a strain 2457T.</title>
        <authorList>
            <person name="Wei J."/>
            <person name="Goldberg M.B."/>
            <person name="Burland V."/>
            <person name="Venkatesan M.M."/>
            <person name="Deng W."/>
            <person name="Fournier G."/>
            <person name="Mayhew G.F."/>
            <person name="Plunkett G. III"/>
            <person name="Rose D.J."/>
            <person name="Darling A."/>
            <person name="Mau B."/>
            <person name="Perna N.T."/>
            <person name="Payne S.M."/>
            <person name="Runyen-Janecky L.J."/>
            <person name="Zhou S."/>
            <person name="Schwartz D.C."/>
            <person name="Blattner F.R."/>
        </authorList>
    </citation>
    <scope>NUCLEOTIDE SEQUENCE [LARGE SCALE GENOMIC DNA]</scope>
    <source>
        <strain>ATCC 700930 / 2457T / Serotype 2a</strain>
    </source>
</reference>
<organism>
    <name type="scientific">Shigella flexneri</name>
    <dbReference type="NCBI Taxonomy" id="623"/>
    <lineage>
        <taxon>Bacteria</taxon>
        <taxon>Pseudomonadati</taxon>
        <taxon>Pseudomonadota</taxon>
        <taxon>Gammaproteobacteria</taxon>
        <taxon>Enterobacterales</taxon>
        <taxon>Enterobacteriaceae</taxon>
        <taxon>Shigella</taxon>
    </lineage>
</organism>
<sequence>MSQLVYFSSSSENTQRFIERLGLPAVRIPLNERERIQVDEPYILIVPSYGGGGTAGAVPRQVIRFLNDEHNRALLRGVIASGNRNFGEAYGRAGDVIARKCGVPWLYRFELMGTQSDIENVRKGVTEFWQRQPQNA</sequence>
<keyword id="KW-1185">Reference proteome</keyword>
<comment type="function">
    <text evidence="1">Probably involved in ribonucleotide reductase function.</text>
</comment>
<comment type="similarity">
    <text evidence="2">Belongs to the NrdI family.</text>
</comment>
<proteinExistence type="inferred from homology"/>
<feature type="chain" id="PRO_0000164333" description="Protein NrdI">
    <location>
        <begin position="1"/>
        <end position="136"/>
    </location>
</feature>